<dbReference type="EC" id="4.3.3.7" evidence="1"/>
<dbReference type="EMBL" id="CP000407">
    <property type="protein sequence ID" value="ABP89685.1"/>
    <property type="molecule type" value="Genomic_DNA"/>
</dbReference>
<dbReference type="SMR" id="A4VU96"/>
<dbReference type="STRING" id="391295.SSU05_0719"/>
<dbReference type="KEGG" id="ssu:SSU05_0719"/>
<dbReference type="eggNOG" id="COG0329">
    <property type="taxonomic scope" value="Bacteria"/>
</dbReference>
<dbReference type="HOGENOM" id="CLU_049343_7_1_9"/>
<dbReference type="UniPathway" id="UPA00034">
    <property type="reaction ID" value="UER00017"/>
</dbReference>
<dbReference type="GO" id="GO:0005829">
    <property type="term" value="C:cytosol"/>
    <property type="evidence" value="ECO:0007669"/>
    <property type="project" value="TreeGrafter"/>
</dbReference>
<dbReference type="GO" id="GO:0008840">
    <property type="term" value="F:4-hydroxy-tetrahydrodipicolinate synthase activity"/>
    <property type="evidence" value="ECO:0007669"/>
    <property type="project" value="UniProtKB-UniRule"/>
</dbReference>
<dbReference type="GO" id="GO:0019877">
    <property type="term" value="P:diaminopimelate biosynthetic process"/>
    <property type="evidence" value="ECO:0007669"/>
    <property type="project" value="UniProtKB-UniRule"/>
</dbReference>
<dbReference type="GO" id="GO:0009089">
    <property type="term" value="P:lysine biosynthetic process via diaminopimelate"/>
    <property type="evidence" value="ECO:0007669"/>
    <property type="project" value="UniProtKB-UniRule"/>
</dbReference>
<dbReference type="CDD" id="cd00950">
    <property type="entry name" value="DHDPS"/>
    <property type="match status" value="1"/>
</dbReference>
<dbReference type="Gene3D" id="3.20.20.70">
    <property type="entry name" value="Aldolase class I"/>
    <property type="match status" value="1"/>
</dbReference>
<dbReference type="HAMAP" id="MF_00418">
    <property type="entry name" value="DapA"/>
    <property type="match status" value="1"/>
</dbReference>
<dbReference type="InterPro" id="IPR013785">
    <property type="entry name" value="Aldolase_TIM"/>
</dbReference>
<dbReference type="InterPro" id="IPR005263">
    <property type="entry name" value="DapA"/>
</dbReference>
<dbReference type="InterPro" id="IPR002220">
    <property type="entry name" value="DapA-like"/>
</dbReference>
<dbReference type="InterPro" id="IPR020625">
    <property type="entry name" value="Schiff_base-form_aldolases_AS"/>
</dbReference>
<dbReference type="NCBIfam" id="TIGR00674">
    <property type="entry name" value="dapA"/>
    <property type="match status" value="1"/>
</dbReference>
<dbReference type="PANTHER" id="PTHR12128:SF66">
    <property type="entry name" value="4-HYDROXY-2-OXOGLUTARATE ALDOLASE, MITOCHONDRIAL"/>
    <property type="match status" value="1"/>
</dbReference>
<dbReference type="PANTHER" id="PTHR12128">
    <property type="entry name" value="DIHYDRODIPICOLINATE SYNTHASE"/>
    <property type="match status" value="1"/>
</dbReference>
<dbReference type="Pfam" id="PF00701">
    <property type="entry name" value="DHDPS"/>
    <property type="match status" value="1"/>
</dbReference>
<dbReference type="PIRSF" id="PIRSF001365">
    <property type="entry name" value="DHDPS"/>
    <property type="match status" value="1"/>
</dbReference>
<dbReference type="PRINTS" id="PR00146">
    <property type="entry name" value="DHPICSNTHASE"/>
</dbReference>
<dbReference type="SMART" id="SM01130">
    <property type="entry name" value="DHDPS"/>
    <property type="match status" value="1"/>
</dbReference>
<dbReference type="SUPFAM" id="SSF51569">
    <property type="entry name" value="Aldolase"/>
    <property type="match status" value="1"/>
</dbReference>
<dbReference type="PROSITE" id="PS00666">
    <property type="entry name" value="DHDPS_2"/>
    <property type="match status" value="1"/>
</dbReference>
<organism>
    <name type="scientific">Streptococcus suis (strain 05ZYH33)</name>
    <dbReference type="NCBI Taxonomy" id="391295"/>
    <lineage>
        <taxon>Bacteria</taxon>
        <taxon>Bacillati</taxon>
        <taxon>Bacillota</taxon>
        <taxon>Bacilli</taxon>
        <taxon>Lactobacillales</taxon>
        <taxon>Streptococcaceae</taxon>
        <taxon>Streptococcus</taxon>
    </lineage>
</organism>
<name>DAPA_STRSY</name>
<feature type="chain" id="PRO_1000050283" description="4-hydroxy-tetrahydrodipicolinate synthase">
    <location>
        <begin position="1"/>
        <end position="311"/>
    </location>
</feature>
<feature type="active site" description="Proton donor/acceptor" evidence="1">
    <location>
        <position position="140"/>
    </location>
</feature>
<feature type="active site" description="Schiff-base intermediate with substrate" evidence="1">
    <location>
        <position position="168"/>
    </location>
</feature>
<feature type="binding site" evidence="1">
    <location>
        <position position="51"/>
    </location>
    <ligand>
        <name>pyruvate</name>
        <dbReference type="ChEBI" id="CHEBI:15361"/>
    </ligand>
</feature>
<feature type="binding site" evidence="1">
    <location>
        <position position="209"/>
    </location>
    <ligand>
        <name>pyruvate</name>
        <dbReference type="ChEBI" id="CHEBI:15361"/>
    </ligand>
</feature>
<feature type="site" description="Part of a proton relay during catalysis" evidence="1">
    <location>
        <position position="50"/>
    </location>
</feature>
<feature type="site" description="Part of a proton relay during catalysis" evidence="1">
    <location>
        <position position="114"/>
    </location>
</feature>
<protein>
    <recommendedName>
        <fullName evidence="1">4-hydroxy-tetrahydrodipicolinate synthase</fullName>
        <shortName evidence="1">HTPA synthase</shortName>
        <ecNumber evidence="1">4.3.3.7</ecNumber>
    </recommendedName>
</protein>
<accession>A4VU96</accession>
<evidence type="ECO:0000255" key="1">
    <source>
        <dbReference type="HAMAP-Rule" id="MF_00418"/>
    </source>
</evidence>
<evidence type="ECO:0000305" key="2"/>
<keyword id="KW-0028">Amino-acid biosynthesis</keyword>
<keyword id="KW-0963">Cytoplasm</keyword>
<keyword id="KW-0220">Diaminopimelate biosynthesis</keyword>
<keyword id="KW-0456">Lyase</keyword>
<keyword id="KW-0457">Lysine biosynthesis</keyword>
<keyword id="KW-0704">Schiff base</keyword>
<gene>
    <name evidence="1" type="primary">dapA</name>
    <name type="ordered locus">SSU05_0719</name>
</gene>
<comment type="function">
    <text evidence="1">Catalyzes the condensation of (S)-aspartate-beta-semialdehyde [(S)-ASA] and pyruvate to 4-hydroxy-tetrahydrodipicolinate (HTPA).</text>
</comment>
<comment type="catalytic activity">
    <reaction evidence="1">
        <text>L-aspartate 4-semialdehyde + pyruvate = (2S,4S)-4-hydroxy-2,3,4,5-tetrahydrodipicolinate + H2O + H(+)</text>
        <dbReference type="Rhea" id="RHEA:34171"/>
        <dbReference type="ChEBI" id="CHEBI:15361"/>
        <dbReference type="ChEBI" id="CHEBI:15377"/>
        <dbReference type="ChEBI" id="CHEBI:15378"/>
        <dbReference type="ChEBI" id="CHEBI:67139"/>
        <dbReference type="ChEBI" id="CHEBI:537519"/>
        <dbReference type="EC" id="4.3.3.7"/>
    </reaction>
</comment>
<comment type="pathway">
    <text evidence="1">Amino-acid biosynthesis; L-lysine biosynthesis via DAP pathway; (S)-tetrahydrodipicolinate from L-aspartate: step 3/4.</text>
</comment>
<comment type="subunit">
    <text evidence="1">Homotetramer; dimer of dimers.</text>
</comment>
<comment type="subcellular location">
    <subcellularLocation>
        <location evidence="1">Cytoplasm</location>
    </subcellularLocation>
</comment>
<comment type="similarity">
    <text evidence="1">Belongs to the DapA family.</text>
</comment>
<comment type="caution">
    <text evidence="2">Was originally thought to be a dihydrodipicolinate synthase (DHDPS), catalyzing the condensation of (S)-aspartate-beta-semialdehyde [(S)-ASA] and pyruvate to dihydrodipicolinate (DHDP). However, it was shown in E.coli that the product of the enzymatic reaction is not dihydrodipicolinate but in fact (4S)-4-hydroxy-2,3,4,5-tetrahydro-(2S)-dipicolinic acid (HTPA), and that the consecutive dehydration reaction leading to DHDP is not spontaneous but catalyzed by DapB.</text>
</comment>
<sequence length="311" mass="34042">MSIQDLRDVKIITAMITPFKEDGSINFEVLPELIEHLLSHHTEGILLAGTTAESPTLTHEEELELFGAVQKIVNGRVPLIAGIGTNDTRDSIEFAKEVAAFGGFAAGLAIVPYYNKPSQEGMYQHFKAIADASDLPIIIYNIPGRVVVEMTPETMLRLAEHPNIIGVKECTSLANMAYLIEHKPEDFLIYTGEDGDAFHAMNLGADGVISVASHTNGDEMYEMFTAIEQQDIRTAAAIQRKFIPKVNALFSYPSPAPVKAVLNYLGFEVGPLRLPLVPCPEEDAKRIIKVVVDGDYEATKATVTGVVRPDY</sequence>
<proteinExistence type="inferred from homology"/>
<reference key="1">
    <citation type="journal article" date="2007" name="PLoS ONE">
        <title>A glimpse of streptococcal toxic shock syndrome from comparative genomics of S. suis 2 Chinese isolates.</title>
        <authorList>
            <person name="Chen C."/>
            <person name="Tang J."/>
            <person name="Dong W."/>
            <person name="Wang C."/>
            <person name="Feng Y."/>
            <person name="Wang J."/>
            <person name="Zheng F."/>
            <person name="Pan X."/>
            <person name="Liu D."/>
            <person name="Li M."/>
            <person name="Song Y."/>
            <person name="Zhu X."/>
            <person name="Sun H."/>
            <person name="Feng T."/>
            <person name="Guo Z."/>
            <person name="Ju A."/>
            <person name="Ge J."/>
            <person name="Dong Y."/>
            <person name="Sun W."/>
            <person name="Jiang Y."/>
            <person name="Wang J."/>
            <person name="Yan J."/>
            <person name="Yang H."/>
            <person name="Wang X."/>
            <person name="Gao G.F."/>
            <person name="Yang R."/>
            <person name="Wang J."/>
            <person name="Yu J."/>
        </authorList>
    </citation>
    <scope>NUCLEOTIDE SEQUENCE [LARGE SCALE GENOMIC DNA]</scope>
    <source>
        <strain>05ZYH33</strain>
    </source>
</reference>